<comment type="similarity">
    <text evidence="1">Belongs to the eukaryotic ribosomal protein eL15 family.</text>
</comment>
<reference key="1">
    <citation type="journal article" date="2002" name="Proc. Natl. Acad. Sci. U.S.A.">
        <title>Genome sequence of the hyperthermophilic crenarchaeon Pyrobaculum aerophilum.</title>
        <authorList>
            <person name="Fitz-Gibbon S.T."/>
            <person name="Ladner H."/>
            <person name="Kim U.-J."/>
            <person name="Stetter K.O."/>
            <person name="Simon M.I."/>
            <person name="Miller J.H."/>
        </authorList>
    </citation>
    <scope>NUCLEOTIDE SEQUENCE [LARGE SCALE GENOMIC DNA]</scope>
    <source>
        <strain>ATCC 51768 / DSM 7523 / JCM 9630 / CIP 104966 / NBRC 100827 / IM2</strain>
    </source>
</reference>
<feature type="chain" id="PRO_0000127581" description="Large ribosomal subunit protein eL15">
    <location>
        <begin position="1"/>
        <end position="191"/>
    </location>
</feature>
<accession>Q8ZWD8</accession>
<name>RL15E_PYRAE</name>
<evidence type="ECO:0000305" key="1"/>
<gene>
    <name type="primary">rpl15e</name>
    <name type="ordered locus">PAE1833</name>
</gene>
<dbReference type="EMBL" id="AE009441">
    <property type="protein sequence ID" value="AAL63764.1"/>
    <property type="molecule type" value="Genomic_DNA"/>
</dbReference>
<dbReference type="RefSeq" id="WP_011008235.1">
    <property type="nucleotide sequence ID" value="NC_003364.1"/>
</dbReference>
<dbReference type="SMR" id="Q8ZWD8"/>
<dbReference type="FunCoup" id="Q8ZWD8">
    <property type="interactions" value="184"/>
</dbReference>
<dbReference type="STRING" id="178306.PAE1833"/>
<dbReference type="EnsemblBacteria" id="AAL63764">
    <property type="protein sequence ID" value="AAL63764"/>
    <property type="gene ID" value="PAE1833"/>
</dbReference>
<dbReference type="GeneID" id="1466018"/>
<dbReference type="KEGG" id="pai:PAE1833"/>
<dbReference type="PATRIC" id="fig|178306.9.peg.1356"/>
<dbReference type="eggNOG" id="arCOG04209">
    <property type="taxonomic scope" value="Archaea"/>
</dbReference>
<dbReference type="HOGENOM" id="CLU_080796_1_0_2"/>
<dbReference type="InParanoid" id="Q8ZWD8"/>
<dbReference type="Proteomes" id="UP000002439">
    <property type="component" value="Chromosome"/>
</dbReference>
<dbReference type="GO" id="GO:0022625">
    <property type="term" value="C:cytosolic large ribosomal subunit"/>
    <property type="evidence" value="ECO:0000318"/>
    <property type="project" value="GO_Central"/>
</dbReference>
<dbReference type="GO" id="GO:0003723">
    <property type="term" value="F:RNA binding"/>
    <property type="evidence" value="ECO:0000318"/>
    <property type="project" value="GO_Central"/>
</dbReference>
<dbReference type="GO" id="GO:0003735">
    <property type="term" value="F:structural constituent of ribosome"/>
    <property type="evidence" value="ECO:0000318"/>
    <property type="project" value="GO_Central"/>
</dbReference>
<dbReference type="GO" id="GO:0002181">
    <property type="term" value="P:cytoplasmic translation"/>
    <property type="evidence" value="ECO:0000318"/>
    <property type="project" value="GO_Central"/>
</dbReference>
<dbReference type="Gene3D" id="3.40.1120.10">
    <property type="entry name" value="Ribosomal protein l15e"/>
    <property type="match status" value="1"/>
</dbReference>
<dbReference type="HAMAP" id="MF_00256">
    <property type="entry name" value="Ribosomal_eL15"/>
    <property type="match status" value="1"/>
</dbReference>
<dbReference type="InterPro" id="IPR024794">
    <property type="entry name" value="Rbsml_eL15_core_dom_sf"/>
</dbReference>
<dbReference type="InterPro" id="IPR000439">
    <property type="entry name" value="Ribosomal_eL15"/>
</dbReference>
<dbReference type="InterPro" id="IPR020926">
    <property type="entry name" value="Ribosomal_eL15_arc"/>
</dbReference>
<dbReference type="InterPro" id="IPR020925">
    <property type="entry name" value="Ribosomal_eL15_CS"/>
</dbReference>
<dbReference type="InterPro" id="IPR012678">
    <property type="entry name" value="Ribosomal_uL23/eL15/eS24_sf"/>
</dbReference>
<dbReference type="NCBIfam" id="NF003269">
    <property type="entry name" value="PRK04243.1"/>
    <property type="match status" value="1"/>
</dbReference>
<dbReference type="PANTHER" id="PTHR11847:SF4">
    <property type="entry name" value="LARGE RIBOSOMAL SUBUNIT PROTEIN EL15"/>
    <property type="match status" value="1"/>
</dbReference>
<dbReference type="PANTHER" id="PTHR11847">
    <property type="entry name" value="RIBOSOMAL PROTEIN L15"/>
    <property type="match status" value="1"/>
</dbReference>
<dbReference type="Pfam" id="PF00827">
    <property type="entry name" value="Ribosomal_L15e"/>
    <property type="match status" value="1"/>
</dbReference>
<dbReference type="SMART" id="SM01384">
    <property type="entry name" value="Ribosomal_L15e"/>
    <property type="match status" value="1"/>
</dbReference>
<dbReference type="SUPFAM" id="SSF54189">
    <property type="entry name" value="Ribosomal proteins S24e, L23 and L15e"/>
    <property type="match status" value="1"/>
</dbReference>
<dbReference type="PROSITE" id="PS01194">
    <property type="entry name" value="RIBOSOMAL_L15E"/>
    <property type="match status" value="1"/>
</dbReference>
<organism>
    <name type="scientific">Pyrobaculum aerophilum (strain ATCC 51768 / DSM 7523 / JCM 9630 / CIP 104966 / NBRC 100827 / IM2)</name>
    <dbReference type="NCBI Taxonomy" id="178306"/>
    <lineage>
        <taxon>Archaea</taxon>
        <taxon>Thermoproteota</taxon>
        <taxon>Thermoprotei</taxon>
        <taxon>Thermoproteales</taxon>
        <taxon>Thermoproteaceae</taxon>
        <taxon>Pyrobaculum</taxon>
    </lineage>
</organism>
<sequence>MARSAYSYMAMWYRKIGREVHERLMRKILIEWRKAPAIVRVERPFRLERARKLGYKAKQGVVVVRVRLMRGPFNRRRPDSGRRPKRMGVYGITAWKSWRQVAEERAARKHPNLEVLNSYWVADDGIYRYFEVILIDCNLPTIKNDPLYSGICGREVPRRRIIRRLRERQKKTIEYLKKTLLPRLKEAPSQQ</sequence>
<keyword id="KW-1185">Reference proteome</keyword>
<keyword id="KW-0687">Ribonucleoprotein</keyword>
<keyword id="KW-0689">Ribosomal protein</keyword>
<protein>
    <recommendedName>
        <fullName evidence="1">Large ribosomal subunit protein eL15</fullName>
    </recommendedName>
    <alternativeName>
        <fullName>50S ribosomal protein L15e</fullName>
    </alternativeName>
</protein>
<proteinExistence type="inferred from homology"/>